<sequence>MAQSTRLGNLIKSLPGYAPGKVVPGWGTTPVMAGIGFMLLIFLVTILQIYNQSLLLQSISFE</sequence>
<protein>
    <recommendedName>
        <fullName evidence="1">Photosystem II reaction center protein H</fullName>
        <shortName evidence="1">PSII-H</shortName>
    </recommendedName>
</protein>
<name>PSBH_PROM3</name>
<gene>
    <name evidence="1" type="primary">psbH</name>
    <name type="ordered locus">P9303_24621</name>
</gene>
<reference key="1">
    <citation type="journal article" date="2007" name="PLoS Genet.">
        <title>Patterns and implications of gene gain and loss in the evolution of Prochlorococcus.</title>
        <authorList>
            <person name="Kettler G.C."/>
            <person name="Martiny A.C."/>
            <person name="Huang K."/>
            <person name="Zucker J."/>
            <person name="Coleman M.L."/>
            <person name="Rodrigue S."/>
            <person name="Chen F."/>
            <person name="Lapidus A."/>
            <person name="Ferriera S."/>
            <person name="Johnson J."/>
            <person name="Steglich C."/>
            <person name="Church G.M."/>
            <person name="Richardson P."/>
            <person name="Chisholm S.W."/>
        </authorList>
    </citation>
    <scope>NUCLEOTIDE SEQUENCE [LARGE SCALE GENOMIC DNA]</scope>
    <source>
        <strain>MIT 9303</strain>
    </source>
</reference>
<proteinExistence type="inferred from homology"/>
<keyword id="KW-0472">Membrane</keyword>
<keyword id="KW-0602">Photosynthesis</keyword>
<keyword id="KW-0604">Photosystem II</keyword>
<keyword id="KW-0793">Thylakoid</keyword>
<keyword id="KW-0812">Transmembrane</keyword>
<keyword id="KW-1133">Transmembrane helix</keyword>
<accession>A2CCI3</accession>
<dbReference type="EMBL" id="CP000554">
    <property type="protein sequence ID" value="ABM79193.1"/>
    <property type="molecule type" value="Genomic_DNA"/>
</dbReference>
<dbReference type="RefSeq" id="WP_011131204.1">
    <property type="nucleotide sequence ID" value="NC_008820.1"/>
</dbReference>
<dbReference type="SMR" id="A2CCI3"/>
<dbReference type="STRING" id="59922.P9303_24621"/>
<dbReference type="KEGG" id="pmf:P9303_24621"/>
<dbReference type="HOGENOM" id="CLU_190203_0_0_3"/>
<dbReference type="BioCyc" id="PMAR59922:G1G80-2153-MONOMER"/>
<dbReference type="Proteomes" id="UP000002274">
    <property type="component" value="Chromosome"/>
</dbReference>
<dbReference type="GO" id="GO:0009523">
    <property type="term" value="C:photosystem II"/>
    <property type="evidence" value="ECO:0007669"/>
    <property type="project" value="UniProtKB-KW"/>
</dbReference>
<dbReference type="GO" id="GO:0031676">
    <property type="term" value="C:plasma membrane-derived thylakoid membrane"/>
    <property type="evidence" value="ECO:0007669"/>
    <property type="project" value="UniProtKB-SubCell"/>
</dbReference>
<dbReference type="GO" id="GO:0042301">
    <property type="term" value="F:phosphate ion binding"/>
    <property type="evidence" value="ECO:0007669"/>
    <property type="project" value="InterPro"/>
</dbReference>
<dbReference type="GO" id="GO:0015979">
    <property type="term" value="P:photosynthesis"/>
    <property type="evidence" value="ECO:0007669"/>
    <property type="project" value="UniProtKB-UniRule"/>
</dbReference>
<dbReference type="GO" id="GO:0050821">
    <property type="term" value="P:protein stabilization"/>
    <property type="evidence" value="ECO:0007669"/>
    <property type="project" value="InterPro"/>
</dbReference>
<dbReference type="Gene3D" id="1.20.5.880">
    <property type="entry name" value="Photosystem II reaction center protein H"/>
    <property type="match status" value="1"/>
</dbReference>
<dbReference type="HAMAP" id="MF_00752">
    <property type="entry name" value="PSII_PsbH"/>
    <property type="match status" value="1"/>
</dbReference>
<dbReference type="InterPro" id="IPR001056">
    <property type="entry name" value="PSII_PsbH"/>
</dbReference>
<dbReference type="InterPro" id="IPR036863">
    <property type="entry name" value="PSII_PsbH_sf"/>
</dbReference>
<dbReference type="NCBIfam" id="NF002728">
    <property type="entry name" value="PRK02624.1"/>
    <property type="match status" value="1"/>
</dbReference>
<dbReference type="PANTHER" id="PTHR34469">
    <property type="entry name" value="PHOTOSYSTEM II REACTION CENTER PROTEIN H"/>
    <property type="match status" value="1"/>
</dbReference>
<dbReference type="PANTHER" id="PTHR34469:SF4">
    <property type="entry name" value="PHOTOSYSTEM II REACTION CENTER PROTEIN H"/>
    <property type="match status" value="1"/>
</dbReference>
<dbReference type="Pfam" id="PF00737">
    <property type="entry name" value="PsbH"/>
    <property type="match status" value="1"/>
</dbReference>
<dbReference type="SUPFAM" id="SSF161025">
    <property type="entry name" value="Photosystem II 10 kDa phosphoprotein PsbH"/>
    <property type="match status" value="1"/>
</dbReference>
<feature type="chain" id="PRO_1000046587" description="Photosystem II reaction center protein H">
    <location>
        <begin position="1"/>
        <end position="62"/>
    </location>
</feature>
<feature type="transmembrane region" description="Helical" evidence="1">
    <location>
        <begin position="30"/>
        <end position="50"/>
    </location>
</feature>
<organism>
    <name type="scientific">Prochlorococcus marinus (strain MIT 9303)</name>
    <dbReference type="NCBI Taxonomy" id="59922"/>
    <lineage>
        <taxon>Bacteria</taxon>
        <taxon>Bacillati</taxon>
        <taxon>Cyanobacteriota</taxon>
        <taxon>Cyanophyceae</taxon>
        <taxon>Synechococcales</taxon>
        <taxon>Prochlorococcaceae</taxon>
        <taxon>Prochlorococcus</taxon>
    </lineage>
</organism>
<evidence type="ECO:0000255" key="1">
    <source>
        <dbReference type="HAMAP-Rule" id="MF_00752"/>
    </source>
</evidence>
<evidence type="ECO:0000305" key="2"/>
<comment type="function">
    <text evidence="1">One of the components of the core complex of photosystem II (PSII), required for its stability and/or assembly. PSII is a light-driven water:plastoquinone oxidoreductase that uses light energy to abstract electrons from H(2)O, generating O(2) and a proton gradient subsequently used for ATP formation. It consists of a core antenna complex that captures photons, and an electron transfer chain that converts photonic excitation into a charge separation.</text>
</comment>
<comment type="subunit">
    <text evidence="2">PSII is composed of 1 copy each of membrane proteins PsbA, PsbB, PsbC, PsbD, PsbE, PsbF, PsbH, PsbI, PsbJ, PsbK, PsbL, PsbM, PsbT, PsbX, PsbY, Psb30/Ycf12, peripheral proteins PsbO, CyanoQ (PsbQ), PsbU, PsbV and a large number of cofactors. It forms dimeric complexes.</text>
</comment>
<comment type="subcellular location">
    <subcellularLocation>
        <location evidence="1">Cellular thylakoid membrane</location>
        <topology evidence="1">Single-pass membrane protein</topology>
    </subcellularLocation>
</comment>
<comment type="similarity">
    <text evidence="1">Belongs to the PsbH family.</text>
</comment>